<reference key="1">
    <citation type="journal article" date="1996" name="Microbiology">
        <title>Systematic sequencing of the 283 kb 210 degrees-232 degrees region of the Bacillus subtilis genome containing the skin element and many sporulation genes.</title>
        <authorList>
            <person name="Mizuno M."/>
            <person name="Masuda S."/>
            <person name="Takemaru K."/>
            <person name="Hosono S."/>
            <person name="Sato T."/>
            <person name="Takeuchi M."/>
            <person name="Kobayashi Y."/>
        </authorList>
    </citation>
    <scope>NUCLEOTIDE SEQUENCE [GENOMIC DNA]</scope>
    <source>
        <strain>168 / JH642</strain>
    </source>
</reference>
<reference key="2">
    <citation type="journal article" date="1997" name="Nature">
        <title>The complete genome sequence of the Gram-positive bacterium Bacillus subtilis.</title>
        <authorList>
            <person name="Kunst F."/>
            <person name="Ogasawara N."/>
            <person name="Moszer I."/>
            <person name="Albertini A.M."/>
            <person name="Alloni G."/>
            <person name="Azevedo V."/>
            <person name="Bertero M.G."/>
            <person name="Bessieres P."/>
            <person name="Bolotin A."/>
            <person name="Borchert S."/>
            <person name="Borriss R."/>
            <person name="Boursier L."/>
            <person name="Brans A."/>
            <person name="Braun M."/>
            <person name="Brignell S.C."/>
            <person name="Bron S."/>
            <person name="Brouillet S."/>
            <person name="Bruschi C.V."/>
            <person name="Caldwell B."/>
            <person name="Capuano V."/>
            <person name="Carter N.M."/>
            <person name="Choi S.-K."/>
            <person name="Codani J.-J."/>
            <person name="Connerton I.F."/>
            <person name="Cummings N.J."/>
            <person name="Daniel R.A."/>
            <person name="Denizot F."/>
            <person name="Devine K.M."/>
            <person name="Duesterhoeft A."/>
            <person name="Ehrlich S.D."/>
            <person name="Emmerson P.T."/>
            <person name="Entian K.-D."/>
            <person name="Errington J."/>
            <person name="Fabret C."/>
            <person name="Ferrari E."/>
            <person name="Foulger D."/>
            <person name="Fritz C."/>
            <person name="Fujita M."/>
            <person name="Fujita Y."/>
            <person name="Fuma S."/>
            <person name="Galizzi A."/>
            <person name="Galleron N."/>
            <person name="Ghim S.-Y."/>
            <person name="Glaser P."/>
            <person name="Goffeau A."/>
            <person name="Golightly E.J."/>
            <person name="Grandi G."/>
            <person name="Guiseppi G."/>
            <person name="Guy B.J."/>
            <person name="Haga K."/>
            <person name="Haiech J."/>
            <person name="Harwood C.R."/>
            <person name="Henaut A."/>
            <person name="Hilbert H."/>
            <person name="Holsappel S."/>
            <person name="Hosono S."/>
            <person name="Hullo M.-F."/>
            <person name="Itaya M."/>
            <person name="Jones L.-M."/>
            <person name="Joris B."/>
            <person name="Karamata D."/>
            <person name="Kasahara Y."/>
            <person name="Klaerr-Blanchard M."/>
            <person name="Klein C."/>
            <person name="Kobayashi Y."/>
            <person name="Koetter P."/>
            <person name="Koningstein G."/>
            <person name="Krogh S."/>
            <person name="Kumano M."/>
            <person name="Kurita K."/>
            <person name="Lapidus A."/>
            <person name="Lardinois S."/>
            <person name="Lauber J."/>
            <person name="Lazarevic V."/>
            <person name="Lee S.-M."/>
            <person name="Levine A."/>
            <person name="Liu H."/>
            <person name="Masuda S."/>
            <person name="Mauel C."/>
            <person name="Medigue C."/>
            <person name="Medina N."/>
            <person name="Mellado R.P."/>
            <person name="Mizuno M."/>
            <person name="Moestl D."/>
            <person name="Nakai S."/>
            <person name="Noback M."/>
            <person name="Noone D."/>
            <person name="O'Reilly M."/>
            <person name="Ogawa K."/>
            <person name="Ogiwara A."/>
            <person name="Oudega B."/>
            <person name="Park S.-H."/>
            <person name="Parro V."/>
            <person name="Pohl T.M."/>
            <person name="Portetelle D."/>
            <person name="Porwollik S."/>
            <person name="Prescott A.M."/>
            <person name="Presecan E."/>
            <person name="Pujic P."/>
            <person name="Purnelle B."/>
            <person name="Rapoport G."/>
            <person name="Rey M."/>
            <person name="Reynolds S."/>
            <person name="Rieger M."/>
            <person name="Rivolta C."/>
            <person name="Rocha E."/>
            <person name="Roche B."/>
            <person name="Rose M."/>
            <person name="Sadaie Y."/>
            <person name="Sato T."/>
            <person name="Scanlan E."/>
            <person name="Schleich S."/>
            <person name="Schroeter R."/>
            <person name="Scoffone F."/>
            <person name="Sekiguchi J."/>
            <person name="Sekowska A."/>
            <person name="Seror S.J."/>
            <person name="Serror P."/>
            <person name="Shin B.-S."/>
            <person name="Soldo B."/>
            <person name="Sorokin A."/>
            <person name="Tacconi E."/>
            <person name="Takagi T."/>
            <person name="Takahashi H."/>
            <person name="Takemaru K."/>
            <person name="Takeuchi M."/>
            <person name="Tamakoshi A."/>
            <person name="Tanaka T."/>
            <person name="Terpstra P."/>
            <person name="Tognoni A."/>
            <person name="Tosato V."/>
            <person name="Uchiyama S."/>
            <person name="Vandenbol M."/>
            <person name="Vannier F."/>
            <person name="Vassarotti A."/>
            <person name="Viari A."/>
            <person name="Wambutt R."/>
            <person name="Wedler E."/>
            <person name="Wedler H."/>
            <person name="Weitzenegger T."/>
            <person name="Winters P."/>
            <person name="Wipat A."/>
            <person name="Yamamoto H."/>
            <person name="Yamane K."/>
            <person name="Yasumoto K."/>
            <person name="Yata K."/>
            <person name="Yoshida K."/>
            <person name="Yoshikawa H.-F."/>
            <person name="Zumstein E."/>
            <person name="Yoshikawa H."/>
            <person name="Danchin A."/>
        </authorList>
    </citation>
    <scope>NUCLEOTIDE SEQUENCE [LARGE SCALE GENOMIC DNA]</scope>
    <source>
        <strain>168</strain>
    </source>
</reference>
<accession>P54531</accession>
<feature type="chain" id="PRO_0000182804" description="Leucine dehydrogenase">
    <location>
        <begin position="1"/>
        <end position="364"/>
    </location>
</feature>
<feature type="active site" evidence="3">
    <location>
        <position position="80"/>
    </location>
</feature>
<feature type="binding site" evidence="2">
    <location>
        <begin position="180"/>
        <end position="186"/>
    </location>
    <ligand>
        <name>NAD(+)</name>
        <dbReference type="ChEBI" id="CHEBI:57540"/>
    </ligand>
</feature>
<dbReference type="EC" id="1.4.1.9"/>
<dbReference type="EMBL" id="D84432">
    <property type="protein sequence ID" value="BAA12595.1"/>
    <property type="molecule type" value="Genomic_DNA"/>
</dbReference>
<dbReference type="EMBL" id="AL009126">
    <property type="protein sequence ID" value="CAB14339.1"/>
    <property type="molecule type" value="Genomic_DNA"/>
</dbReference>
<dbReference type="PIR" id="B69962">
    <property type="entry name" value="B69962"/>
</dbReference>
<dbReference type="SMR" id="P54531"/>
<dbReference type="FunCoup" id="P54531">
    <property type="interactions" value="36"/>
</dbReference>
<dbReference type="IntAct" id="P54531">
    <property type="interactions" value="1"/>
</dbReference>
<dbReference type="MINT" id="P54531"/>
<dbReference type="STRING" id="224308.BSU24080"/>
<dbReference type="jPOST" id="P54531"/>
<dbReference type="PaxDb" id="224308-BSU24080"/>
<dbReference type="EnsemblBacteria" id="CAB14339">
    <property type="protein sequence ID" value="CAB14339"/>
    <property type="gene ID" value="BSU_24080"/>
</dbReference>
<dbReference type="GeneID" id="938670"/>
<dbReference type="KEGG" id="bsu:BSU24080"/>
<dbReference type="PATRIC" id="fig|224308.179.peg.2622"/>
<dbReference type="eggNOG" id="COG0334">
    <property type="taxonomic scope" value="Bacteria"/>
</dbReference>
<dbReference type="InParanoid" id="P54531"/>
<dbReference type="OrthoDB" id="9803297at2"/>
<dbReference type="PhylomeDB" id="P54531"/>
<dbReference type="BioCyc" id="BSUB:BSU24080-MONOMER"/>
<dbReference type="UniPathway" id="UPA00363">
    <property type="reaction ID" value="UER00858"/>
</dbReference>
<dbReference type="Proteomes" id="UP000001570">
    <property type="component" value="Chromosome"/>
</dbReference>
<dbReference type="GO" id="GO:0050049">
    <property type="term" value="F:L-leucine dehydrogenase activity"/>
    <property type="evidence" value="ECO:0007669"/>
    <property type="project" value="UniProtKB-EC"/>
</dbReference>
<dbReference type="GO" id="GO:0006552">
    <property type="term" value="P:L-leucine catabolic process"/>
    <property type="evidence" value="ECO:0007669"/>
    <property type="project" value="UniProtKB-UniPathway"/>
</dbReference>
<dbReference type="CDD" id="cd01075">
    <property type="entry name" value="NAD_bind_Leu_Phe_Val_DH"/>
    <property type="match status" value="1"/>
</dbReference>
<dbReference type="FunFam" id="3.40.50.10860:FF:000010">
    <property type="entry name" value="Leucine dehydrogenase"/>
    <property type="match status" value="1"/>
</dbReference>
<dbReference type="FunFam" id="3.40.50.720:FF:000196">
    <property type="entry name" value="Leucine dehydrogenase"/>
    <property type="match status" value="1"/>
</dbReference>
<dbReference type="Gene3D" id="3.40.50.10860">
    <property type="entry name" value="Leucine Dehydrogenase, chain A, domain 1"/>
    <property type="match status" value="1"/>
</dbReference>
<dbReference type="Gene3D" id="3.40.50.720">
    <property type="entry name" value="NAD(P)-binding Rossmann-like Domain"/>
    <property type="match status" value="1"/>
</dbReference>
<dbReference type="InterPro" id="IPR046346">
    <property type="entry name" value="Aminoacid_DH-like_N_sf"/>
</dbReference>
<dbReference type="InterPro" id="IPR006095">
    <property type="entry name" value="Glu/Leu/Phe/Val/Trp_DH"/>
</dbReference>
<dbReference type="InterPro" id="IPR006096">
    <property type="entry name" value="Glu/Leu/Phe/Val/Trp_DH_C"/>
</dbReference>
<dbReference type="InterPro" id="IPR006097">
    <property type="entry name" value="Glu/Leu/Phe/Val/Trp_DH_dimer"/>
</dbReference>
<dbReference type="InterPro" id="IPR033524">
    <property type="entry name" value="Glu/Leu/Phe/Val_DH_AS"/>
</dbReference>
<dbReference type="InterPro" id="IPR016211">
    <property type="entry name" value="Glu/Phe/Leu/Val/Trp_DH_bac/arc"/>
</dbReference>
<dbReference type="InterPro" id="IPR036291">
    <property type="entry name" value="NAD(P)-bd_dom_sf"/>
</dbReference>
<dbReference type="PANTHER" id="PTHR42722">
    <property type="entry name" value="LEUCINE DEHYDROGENASE"/>
    <property type="match status" value="1"/>
</dbReference>
<dbReference type="PANTHER" id="PTHR42722:SF1">
    <property type="entry name" value="VALINE DEHYDROGENASE"/>
    <property type="match status" value="1"/>
</dbReference>
<dbReference type="Pfam" id="PF00208">
    <property type="entry name" value="ELFV_dehydrog"/>
    <property type="match status" value="2"/>
</dbReference>
<dbReference type="Pfam" id="PF02812">
    <property type="entry name" value="ELFV_dehydrog_N"/>
    <property type="match status" value="1"/>
</dbReference>
<dbReference type="PIRSF" id="PIRSF000188">
    <property type="entry name" value="Phe_leu_dh"/>
    <property type="match status" value="1"/>
</dbReference>
<dbReference type="PRINTS" id="PR00082">
    <property type="entry name" value="GLFDHDRGNASE"/>
</dbReference>
<dbReference type="SMART" id="SM00839">
    <property type="entry name" value="ELFV_dehydrog"/>
    <property type="match status" value="1"/>
</dbReference>
<dbReference type="SUPFAM" id="SSF53223">
    <property type="entry name" value="Aminoacid dehydrogenase-like, N-terminal domain"/>
    <property type="match status" value="1"/>
</dbReference>
<dbReference type="SUPFAM" id="SSF51735">
    <property type="entry name" value="NAD(P)-binding Rossmann-fold domains"/>
    <property type="match status" value="1"/>
</dbReference>
<dbReference type="PROSITE" id="PS00074">
    <property type="entry name" value="GLFV_DEHYDROGENASE"/>
    <property type="match status" value="1"/>
</dbReference>
<gene>
    <name type="primary">yqiT</name>
    <name type="ordered locus">BSU24080</name>
</gene>
<proteinExistence type="inferred from homology"/>
<protein>
    <recommendedName>
        <fullName>Leucine dehydrogenase</fullName>
        <shortName>LeuDH</shortName>
        <ecNumber>1.4.1.9</ecNumber>
    </recommendedName>
</protein>
<keyword id="KW-0101">Branched-chain amino acid catabolism</keyword>
<keyword id="KW-0520">NAD</keyword>
<keyword id="KW-0560">Oxidoreductase</keyword>
<keyword id="KW-1185">Reference proteome</keyword>
<sequence>MELFKYMEKYDYEQLVFCQDEQSGLKAIIAIHDTTLGPALGGTRMWTYENEEAAIEDALRLARGMTYKNAAAGLNLGGGKTVIIGDPRKDKNEEMFRAFGRYIQGLNGRYITAEDVGTTVEDMDIIHDETDYVTGISPAFGSSGNPSPVTAYGVYRGMKAAAKAAFGTDSLEGKTIAVQGVGNVAYNLCRHLHEEGANLIVTDINKQSVQRAVEDFGARAVDPDDIYSQDCDIYAPCALGATINDDTIKQLKAKVIAGAANNQLKETRHGDQIHEMGIVYAPDYVINAGGVINVADELYGYNAERALKKVEGIYGNIERVLEISQRDGIPAYLAADRLAEERIERMRRSRSQFLQNGHSVLSRR</sequence>
<organism>
    <name type="scientific">Bacillus subtilis (strain 168)</name>
    <dbReference type="NCBI Taxonomy" id="224308"/>
    <lineage>
        <taxon>Bacteria</taxon>
        <taxon>Bacillati</taxon>
        <taxon>Bacillota</taxon>
        <taxon>Bacilli</taxon>
        <taxon>Bacillales</taxon>
        <taxon>Bacillaceae</taxon>
        <taxon>Bacillus</taxon>
    </lineage>
</organism>
<name>DHLE_BACSU</name>
<comment type="function">
    <text evidence="1">Catalyzes the reversible deamination of L-leucine to 4-methyl-2-oxopentanoate.</text>
</comment>
<comment type="catalytic activity">
    <reaction>
        <text>L-leucine + NAD(+) + H2O = 4-methyl-2-oxopentanoate + NH4(+) + NADH + H(+)</text>
        <dbReference type="Rhea" id="RHEA:12220"/>
        <dbReference type="ChEBI" id="CHEBI:15377"/>
        <dbReference type="ChEBI" id="CHEBI:15378"/>
        <dbReference type="ChEBI" id="CHEBI:17865"/>
        <dbReference type="ChEBI" id="CHEBI:28938"/>
        <dbReference type="ChEBI" id="CHEBI:57427"/>
        <dbReference type="ChEBI" id="CHEBI:57540"/>
        <dbReference type="ChEBI" id="CHEBI:57945"/>
        <dbReference type="EC" id="1.4.1.9"/>
    </reaction>
</comment>
<comment type="pathway">
    <text>Amino-acid degradation; L-leucine degradation; 4-methyl-2-oxopentanoate from L-leucine (dehydrogenase route): step 1/1.</text>
</comment>
<comment type="similarity">
    <text evidence="4">Belongs to the Glu/Leu/Phe/Val dehydrogenases family.</text>
</comment>
<evidence type="ECO:0000250" key="1"/>
<evidence type="ECO:0000255" key="2"/>
<evidence type="ECO:0000255" key="3">
    <source>
        <dbReference type="PROSITE-ProRule" id="PRU10011"/>
    </source>
</evidence>
<evidence type="ECO:0000305" key="4"/>